<gene>
    <name type="primary">sey1</name>
    <name type="ORF">AFUB_011650</name>
</gene>
<name>SEY1_ASPFC</name>
<protein>
    <recommendedName>
        <fullName evidence="1">Protein sey1</fullName>
        <ecNumber evidence="1">3.6.5.-</ecNumber>
    </recommendedName>
</protein>
<comment type="function">
    <text evidence="1">Cooperates with the reticulon proteins and tubule-shaping DP1 family proteins to generate and maintain the structure of the tubular endoplasmic reticulum network. Has GTPase activity, which is required for its function in ER organization.</text>
</comment>
<comment type="subcellular location">
    <subcellularLocation>
        <location evidence="1">Endoplasmic reticulum membrane</location>
        <topology evidence="1">Multi-pass membrane protein</topology>
    </subcellularLocation>
    <text evidence="1">Enriched in the cortical ER. Concentrated in punctae along the ER tubules.</text>
</comment>
<comment type="similarity">
    <text evidence="2">Belongs to the TRAFAC class dynamin-like GTPase superfamily. GB1/RHD3 GTPase family. RHD3 subfamily.</text>
</comment>
<organism>
    <name type="scientific">Aspergillus fumigatus (strain CBS 144.89 / FGSC A1163 / CEA10)</name>
    <name type="common">Neosartorya fumigata</name>
    <dbReference type="NCBI Taxonomy" id="451804"/>
    <lineage>
        <taxon>Eukaryota</taxon>
        <taxon>Fungi</taxon>
        <taxon>Dikarya</taxon>
        <taxon>Ascomycota</taxon>
        <taxon>Pezizomycotina</taxon>
        <taxon>Eurotiomycetes</taxon>
        <taxon>Eurotiomycetidae</taxon>
        <taxon>Eurotiales</taxon>
        <taxon>Aspergillaceae</taxon>
        <taxon>Aspergillus</taxon>
        <taxon>Aspergillus subgen. Fumigati</taxon>
    </lineage>
</organism>
<feature type="chain" id="PRO_0000384971" description="Protein sey1">
    <location>
        <begin position="1"/>
        <end position="864"/>
    </location>
</feature>
<feature type="topological domain" description="Cytoplasmic" evidence="1">
    <location>
        <begin position="1"/>
        <end position="747"/>
    </location>
</feature>
<feature type="transmembrane region" description="Helical" evidence="1">
    <location>
        <begin position="748"/>
        <end position="768"/>
    </location>
</feature>
<feature type="topological domain" description="Lumenal" evidence="1">
    <location>
        <begin position="769"/>
        <end position="771"/>
    </location>
</feature>
<feature type="transmembrane region" description="Helical" evidence="1">
    <location>
        <begin position="772"/>
        <end position="792"/>
    </location>
</feature>
<feature type="topological domain" description="Cytoplasmic" evidence="1">
    <location>
        <begin position="793"/>
        <end position="864"/>
    </location>
</feature>
<feature type="domain" description="GB1/RHD3-type G" evidence="2">
    <location>
        <begin position="49"/>
        <end position="305"/>
    </location>
</feature>
<feature type="region of interest" description="Disordered" evidence="3">
    <location>
        <begin position="675"/>
        <end position="701"/>
    </location>
</feature>
<feature type="region of interest" description="Disordered" evidence="3">
    <location>
        <begin position="830"/>
        <end position="864"/>
    </location>
</feature>
<feature type="coiled-coil region" evidence="1">
    <location>
        <begin position="480"/>
        <end position="506"/>
    </location>
</feature>
<feature type="compositionally biased region" description="Acidic residues" evidence="3">
    <location>
        <begin position="688"/>
        <end position="701"/>
    </location>
</feature>
<feature type="binding site" evidence="1">
    <location>
        <begin position="59"/>
        <end position="66"/>
    </location>
    <ligand>
        <name>GTP</name>
        <dbReference type="ChEBI" id="CHEBI:37565"/>
    </ligand>
</feature>
<reference key="1">
    <citation type="journal article" date="2008" name="PLoS Genet.">
        <title>Genomic islands in the pathogenic filamentous fungus Aspergillus fumigatus.</title>
        <authorList>
            <person name="Fedorova N.D."/>
            <person name="Khaldi N."/>
            <person name="Joardar V.S."/>
            <person name="Maiti R."/>
            <person name="Amedeo P."/>
            <person name="Anderson M.J."/>
            <person name="Crabtree J."/>
            <person name="Silva J.C."/>
            <person name="Badger J.H."/>
            <person name="Albarraq A."/>
            <person name="Angiuoli S."/>
            <person name="Bussey H."/>
            <person name="Bowyer P."/>
            <person name="Cotty P.J."/>
            <person name="Dyer P.S."/>
            <person name="Egan A."/>
            <person name="Galens K."/>
            <person name="Fraser-Liggett C.M."/>
            <person name="Haas B.J."/>
            <person name="Inman J.M."/>
            <person name="Kent R."/>
            <person name="Lemieux S."/>
            <person name="Malavazi I."/>
            <person name="Orvis J."/>
            <person name="Roemer T."/>
            <person name="Ronning C.M."/>
            <person name="Sundaram J.P."/>
            <person name="Sutton G."/>
            <person name="Turner G."/>
            <person name="Venter J.C."/>
            <person name="White O.R."/>
            <person name="Whitty B.R."/>
            <person name="Youngman P."/>
            <person name="Wolfe K.H."/>
            <person name="Goldman G.H."/>
            <person name="Wortman J.R."/>
            <person name="Jiang B."/>
            <person name="Denning D.W."/>
            <person name="Nierman W.C."/>
        </authorList>
    </citation>
    <scope>NUCLEOTIDE SEQUENCE [LARGE SCALE GENOMIC DNA]</scope>
    <source>
        <strain>CBS 144.89 / FGSC A1163 / CEA10</strain>
    </source>
</reference>
<proteinExistence type="inferred from homology"/>
<evidence type="ECO:0000255" key="1">
    <source>
        <dbReference type="HAMAP-Rule" id="MF_03109"/>
    </source>
</evidence>
<evidence type="ECO:0000255" key="2">
    <source>
        <dbReference type="PROSITE-ProRule" id="PRU01052"/>
    </source>
</evidence>
<evidence type="ECO:0000256" key="3">
    <source>
        <dbReference type="SAM" id="MobiDB-lite"/>
    </source>
</evidence>
<keyword id="KW-0175">Coiled coil</keyword>
<keyword id="KW-0256">Endoplasmic reticulum</keyword>
<keyword id="KW-0342">GTP-binding</keyword>
<keyword id="KW-0378">Hydrolase</keyword>
<keyword id="KW-0472">Membrane</keyword>
<keyword id="KW-0547">Nucleotide-binding</keyword>
<keyword id="KW-0812">Transmembrane</keyword>
<keyword id="KW-1133">Transmembrane helix</keyword>
<sequence>MATNGHFASIGVDNDKTAYEHGVQVIDENKEFNPNISKYLSLENVTHAGFNYHLISVFGSQSTGKSTLLNHLFGTHFSVMSDSERRQTTKGIWMSKNKREGEATVDPTLRMADNILVMDVEGTDGRERGEDQDFERKSALFALATSEVLIVNIWEHQVGLYQGANMGLLKTVFEVNLQLFLKDKNTTHRSLLFFVIRDFVGTTPLKNLQKTLMEDMARLWESISKPPGLESSSVHDYFDFQFYGLPHKSYQPEQFVAETKKLSLRFREGQRDPSMDARRGEFSEGGVFLPEYHRRIPADGFSRYAEGIWDQIVNNKDLDLPTQQELLAQFRCDEILREVMIAFDEAIVPFEEKQSQSARLGEPEVLGGLGAAMRSSRAKAVKNFETEASRYHKGVYQRKRAELESKVDTRLKALLQGQLNAAHKSGINEFSEAVSSSVKSGQKQGAGYDFAEIVNEEVKKAIAKFEDVARSTVVEGTTWSDYKQELALYEKELADVSGRLRREEMRRLANRVERWVQSRLGESVGLEFNALGSGRAGGGAPETGEKPLEKAFWDRVWNVFVETVLDAERRFTDRASSFDASLEEVDVGLWRLRRKSWGVLRAKIDEEMTEGNLLLKLRENFEDKFRYDDAGVPRIWRPTDDIEGIYTRARESTLTLIPLLSRFRLAETSAPPPLDRWIGHTPSSATPADEEDLPPIGGVDEEEGKSLDEEMMILSEAKRQELTVRFKKAADGVYVEAKRSAIGGMTQVPLYFYGLLLALGWNEIIAVLRNPAYFFLLFICAVGAYVTYQLNLWGPIIKMTEAASSQALVEGKKRLREFLESSDTGRQAIAMSAGSGRSGEQYELSDLSKKGKARTSADEDMDDL</sequence>
<dbReference type="EC" id="3.6.5.-" evidence="1"/>
<dbReference type="EMBL" id="DS499594">
    <property type="protein sequence ID" value="EDP56454.1"/>
    <property type="molecule type" value="Genomic_DNA"/>
</dbReference>
<dbReference type="SMR" id="B0XQZ0"/>
<dbReference type="EnsemblFungi" id="EDP56454">
    <property type="protein sequence ID" value="EDP56454"/>
    <property type="gene ID" value="AFUB_011650"/>
</dbReference>
<dbReference type="VEuPathDB" id="FungiDB:AFUB_011650"/>
<dbReference type="HOGENOM" id="CLU_011270_0_0_1"/>
<dbReference type="OrthoDB" id="21407at5052"/>
<dbReference type="PhylomeDB" id="B0XQZ0"/>
<dbReference type="Proteomes" id="UP000001699">
    <property type="component" value="Unassembled WGS sequence"/>
</dbReference>
<dbReference type="GO" id="GO:0005789">
    <property type="term" value="C:endoplasmic reticulum membrane"/>
    <property type="evidence" value="ECO:0007669"/>
    <property type="project" value="UniProtKB-SubCell"/>
</dbReference>
<dbReference type="GO" id="GO:0005525">
    <property type="term" value="F:GTP binding"/>
    <property type="evidence" value="ECO:0007669"/>
    <property type="project" value="UniProtKB-UniRule"/>
</dbReference>
<dbReference type="GO" id="GO:0003924">
    <property type="term" value="F:GTPase activity"/>
    <property type="evidence" value="ECO:0007669"/>
    <property type="project" value="UniProtKB-UniRule"/>
</dbReference>
<dbReference type="GO" id="GO:0016320">
    <property type="term" value="P:endoplasmic reticulum membrane fusion"/>
    <property type="evidence" value="ECO:0007669"/>
    <property type="project" value="TreeGrafter"/>
</dbReference>
<dbReference type="CDD" id="cd01851">
    <property type="entry name" value="GBP"/>
    <property type="match status" value="1"/>
</dbReference>
<dbReference type="FunFam" id="3.40.50.300:FF:000727">
    <property type="entry name" value="Protein SEY1 homolog"/>
    <property type="match status" value="1"/>
</dbReference>
<dbReference type="Gene3D" id="3.40.50.300">
    <property type="entry name" value="P-loop containing nucleotide triphosphate hydrolases"/>
    <property type="match status" value="1"/>
</dbReference>
<dbReference type="HAMAP" id="MF_03109">
    <property type="entry name" value="Sey1"/>
    <property type="match status" value="1"/>
</dbReference>
<dbReference type="InterPro" id="IPR030386">
    <property type="entry name" value="G_GB1_RHD3_dom"/>
</dbReference>
<dbReference type="InterPro" id="IPR027417">
    <property type="entry name" value="P-loop_NTPase"/>
</dbReference>
<dbReference type="InterPro" id="IPR008803">
    <property type="entry name" value="RHD3/Sey1"/>
</dbReference>
<dbReference type="InterPro" id="IPR046758">
    <property type="entry name" value="Sey1/RHD3-like_3HB"/>
</dbReference>
<dbReference type="PANTHER" id="PTHR45923">
    <property type="entry name" value="PROTEIN SEY1"/>
    <property type="match status" value="1"/>
</dbReference>
<dbReference type="PANTHER" id="PTHR45923:SF2">
    <property type="entry name" value="PROTEIN SEY1"/>
    <property type="match status" value="1"/>
</dbReference>
<dbReference type="Pfam" id="PF05879">
    <property type="entry name" value="RHD3_GTPase"/>
    <property type="match status" value="1"/>
</dbReference>
<dbReference type="Pfam" id="PF20428">
    <property type="entry name" value="Sey1_3HB"/>
    <property type="match status" value="1"/>
</dbReference>
<dbReference type="SUPFAM" id="SSF52540">
    <property type="entry name" value="P-loop containing nucleoside triphosphate hydrolases"/>
    <property type="match status" value="1"/>
</dbReference>
<dbReference type="PROSITE" id="PS51715">
    <property type="entry name" value="G_GB1_RHD3"/>
    <property type="match status" value="1"/>
</dbReference>
<accession>B0XQZ0</accession>